<organism>
    <name type="scientific">Methanocaldococcus jannaschii (strain ATCC 43067 / DSM 2661 / JAL-1 / JCM 10045 / NBRC 100440)</name>
    <name type="common">Methanococcus jannaschii</name>
    <dbReference type="NCBI Taxonomy" id="243232"/>
    <lineage>
        <taxon>Archaea</taxon>
        <taxon>Methanobacteriati</taxon>
        <taxon>Methanobacteriota</taxon>
        <taxon>Methanomada group</taxon>
        <taxon>Methanococci</taxon>
        <taxon>Methanococcales</taxon>
        <taxon>Methanocaldococcaceae</taxon>
        <taxon>Methanocaldococcus</taxon>
    </lineage>
</organism>
<geneLocation type="plasmid">
    <name>large ECE</name>
</geneLocation>
<protein>
    <recommendedName>
        <fullName>Uncharacterized protein MJECL05</fullName>
    </recommendedName>
</protein>
<proteinExistence type="predicted"/>
<reference key="1">
    <citation type="journal article" date="1996" name="Science">
        <title>Complete genome sequence of the methanogenic archaeon, Methanococcus jannaschii.</title>
        <authorList>
            <person name="Bult C.J."/>
            <person name="White O."/>
            <person name="Olsen G.J."/>
            <person name="Zhou L."/>
            <person name="Fleischmann R.D."/>
            <person name="Sutton G.G."/>
            <person name="Blake J.A."/>
            <person name="FitzGerald L.M."/>
            <person name="Clayton R.A."/>
            <person name="Gocayne J.D."/>
            <person name="Kerlavage A.R."/>
            <person name="Dougherty B.A."/>
            <person name="Tomb J.-F."/>
            <person name="Adams M.D."/>
            <person name="Reich C.I."/>
            <person name="Overbeek R."/>
            <person name="Kirkness E.F."/>
            <person name="Weinstock K.G."/>
            <person name="Merrick J.M."/>
            <person name="Glodek A."/>
            <person name="Scott J.L."/>
            <person name="Geoghagen N.S.M."/>
            <person name="Weidman J.F."/>
            <person name="Fuhrmann J.L."/>
            <person name="Nguyen D."/>
            <person name="Utterback T.R."/>
            <person name="Kelley J.M."/>
            <person name="Peterson J.D."/>
            <person name="Sadow P.W."/>
            <person name="Hanna M.C."/>
            <person name="Cotton M.D."/>
            <person name="Roberts K.M."/>
            <person name="Hurst M.A."/>
            <person name="Kaine B.P."/>
            <person name="Borodovsky M."/>
            <person name="Klenk H.-P."/>
            <person name="Fraser C.M."/>
            <person name="Smith H.O."/>
            <person name="Woese C.R."/>
            <person name="Venter J.C."/>
        </authorList>
    </citation>
    <scope>NUCLEOTIDE SEQUENCE [LARGE SCALE GENOMIC DNA]</scope>
    <source>
        <strain>ATCC 43067 / DSM 2661 / JAL-1 / JCM 10045 / NBRC 100440</strain>
    </source>
</reference>
<gene>
    <name type="ordered locus">MJECL05</name>
</gene>
<dbReference type="EMBL" id="L77118">
    <property type="protein sequence ID" value="AAC37071.1"/>
    <property type="molecule type" value="Genomic_DNA"/>
</dbReference>
<dbReference type="PIR" id="E64510">
    <property type="entry name" value="E64510"/>
</dbReference>
<dbReference type="RefSeq" id="WP_010890052.1">
    <property type="nucleotide sequence ID" value="NC_001732.1"/>
</dbReference>
<dbReference type="SMR" id="Q60262"/>
<dbReference type="PaxDb" id="243232-MJ_ECL05"/>
<dbReference type="EnsemblBacteria" id="AAC37071">
    <property type="protein sequence ID" value="AAC37071"/>
    <property type="gene ID" value="MJ_ECL05"/>
</dbReference>
<dbReference type="GeneID" id="1450784"/>
<dbReference type="KEGG" id="mja:MJ_ECL05"/>
<dbReference type="eggNOG" id="arCOG10969">
    <property type="taxonomic scope" value="Archaea"/>
</dbReference>
<dbReference type="HOGENOM" id="CLU_210692_0_0_2"/>
<dbReference type="InParanoid" id="Q60262"/>
<dbReference type="Proteomes" id="UP000000805">
    <property type="component" value="Plasmid pDSM2661_1"/>
</dbReference>
<keyword id="KW-0614">Plasmid</keyword>
<keyword id="KW-1185">Reference proteome</keyword>
<sequence length="62" mass="7327">MEIIALLIEEGIIIIKDKKVAERFLKDLESSQGMDWKEIRERAERAKKQLEEGIEWAKKTKL</sequence>
<feature type="chain" id="PRO_0000107497" description="Uncharacterized protein MJECL05">
    <location>
        <begin position="1"/>
        <end position="62"/>
    </location>
</feature>
<name>Y3505_METJA</name>
<accession>Q60262</accession>